<gene>
    <name type="primary">serS1</name>
    <name type="ordered locus">Mbar_A0541</name>
</gene>
<reference key="1">
    <citation type="journal article" date="2006" name="J. Bacteriol.">
        <title>The Methanosarcina barkeri genome: comparative analysis with Methanosarcina acetivorans and Methanosarcina mazei reveals extensive rearrangement within methanosarcinal genomes.</title>
        <authorList>
            <person name="Maeder D.L."/>
            <person name="Anderson I."/>
            <person name="Brettin T.S."/>
            <person name="Bruce D.C."/>
            <person name="Gilna P."/>
            <person name="Han C.S."/>
            <person name="Lapidus A."/>
            <person name="Metcalf W.W."/>
            <person name="Saunders E."/>
            <person name="Tapia R."/>
            <person name="Sowers K.R."/>
        </authorList>
    </citation>
    <scope>NUCLEOTIDE SEQUENCE [LARGE SCALE GENOMIC DNA]</scope>
    <source>
        <strain>Fusaro / DSM 804</strain>
    </source>
</reference>
<reference key="2">
    <citation type="journal article" date="2004" name="J. Biol. Chem.">
        <title>Differential modes of transfer RNA(Ser) recognition in Methanosarcina barkeri.</title>
        <authorList>
            <person name="Korencic D."/>
            <person name="Polycarpo C."/>
            <person name="Weygand-Durasevic I."/>
            <person name="Soell D."/>
        </authorList>
    </citation>
    <scope>FUNCTION</scope>
    <scope>KINETIC PARAMETERS</scope>
    <scope>TRNA(SER) RECOGNITION</scope>
</reference>
<proteinExistence type="evidence at protein level"/>
<dbReference type="EC" id="6.1.1.11"/>
<dbReference type="EMBL" id="CP000099">
    <property type="protein sequence ID" value="AAZ69522.1"/>
    <property type="status" value="ALT_INIT"/>
    <property type="molecule type" value="Genomic_DNA"/>
</dbReference>
<dbReference type="SMR" id="Q46F20"/>
<dbReference type="STRING" id="269797.Mbar_A0541"/>
<dbReference type="PaxDb" id="269797-Mbar_A0541"/>
<dbReference type="KEGG" id="mba:Mbar_A0541"/>
<dbReference type="eggNOG" id="arCOG00403">
    <property type="taxonomic scope" value="Archaea"/>
</dbReference>
<dbReference type="HOGENOM" id="CLU_023797_1_1_2"/>
<dbReference type="OrthoDB" id="35932at2157"/>
<dbReference type="UniPathway" id="UPA00906">
    <property type="reaction ID" value="UER00895"/>
</dbReference>
<dbReference type="GO" id="GO:0005737">
    <property type="term" value="C:cytoplasm"/>
    <property type="evidence" value="ECO:0007669"/>
    <property type="project" value="UniProtKB-SubCell"/>
</dbReference>
<dbReference type="GO" id="GO:0005524">
    <property type="term" value="F:ATP binding"/>
    <property type="evidence" value="ECO:0007669"/>
    <property type="project" value="UniProtKB-UniRule"/>
</dbReference>
<dbReference type="GO" id="GO:0004828">
    <property type="term" value="F:serine-tRNA ligase activity"/>
    <property type="evidence" value="ECO:0007669"/>
    <property type="project" value="UniProtKB-UniRule"/>
</dbReference>
<dbReference type="GO" id="GO:0016260">
    <property type="term" value="P:selenocysteine biosynthetic process"/>
    <property type="evidence" value="ECO:0007669"/>
    <property type="project" value="UniProtKB-UniRule"/>
</dbReference>
<dbReference type="GO" id="GO:0006434">
    <property type="term" value="P:seryl-tRNA aminoacylation"/>
    <property type="evidence" value="ECO:0007669"/>
    <property type="project" value="UniProtKB-UniRule"/>
</dbReference>
<dbReference type="CDD" id="cd00770">
    <property type="entry name" value="SerRS_core"/>
    <property type="match status" value="1"/>
</dbReference>
<dbReference type="Gene3D" id="3.30.930.10">
    <property type="entry name" value="Bira Bifunctional Protein, Domain 2"/>
    <property type="match status" value="1"/>
</dbReference>
<dbReference type="Gene3D" id="1.10.287.40">
    <property type="entry name" value="Serine-tRNA synthetase, tRNA binding domain"/>
    <property type="match status" value="1"/>
</dbReference>
<dbReference type="HAMAP" id="MF_00176">
    <property type="entry name" value="Ser_tRNA_synth_type1"/>
    <property type="match status" value="1"/>
</dbReference>
<dbReference type="InterPro" id="IPR002314">
    <property type="entry name" value="aa-tRNA-synt_IIb"/>
</dbReference>
<dbReference type="InterPro" id="IPR006195">
    <property type="entry name" value="aa-tRNA-synth_II"/>
</dbReference>
<dbReference type="InterPro" id="IPR045864">
    <property type="entry name" value="aa-tRNA-synth_II/BPL/LPL"/>
</dbReference>
<dbReference type="InterPro" id="IPR002317">
    <property type="entry name" value="Ser-tRNA-ligase_type_1"/>
</dbReference>
<dbReference type="InterPro" id="IPR015866">
    <property type="entry name" value="Ser-tRNA-synth_1_N"/>
</dbReference>
<dbReference type="InterPro" id="IPR042103">
    <property type="entry name" value="SerRS_1_N_sf"/>
</dbReference>
<dbReference type="InterPro" id="IPR033729">
    <property type="entry name" value="SerRS_core"/>
</dbReference>
<dbReference type="InterPro" id="IPR010978">
    <property type="entry name" value="tRNA-bd_arm"/>
</dbReference>
<dbReference type="NCBIfam" id="TIGR00414">
    <property type="entry name" value="serS"/>
    <property type="match status" value="1"/>
</dbReference>
<dbReference type="PANTHER" id="PTHR43697:SF1">
    <property type="entry name" value="SERINE--TRNA LIGASE"/>
    <property type="match status" value="1"/>
</dbReference>
<dbReference type="PANTHER" id="PTHR43697">
    <property type="entry name" value="SERYL-TRNA SYNTHETASE"/>
    <property type="match status" value="1"/>
</dbReference>
<dbReference type="Pfam" id="PF02403">
    <property type="entry name" value="Seryl_tRNA_N"/>
    <property type="match status" value="1"/>
</dbReference>
<dbReference type="Pfam" id="PF00587">
    <property type="entry name" value="tRNA-synt_2b"/>
    <property type="match status" value="1"/>
</dbReference>
<dbReference type="PIRSF" id="PIRSF001529">
    <property type="entry name" value="Ser-tRNA-synth_IIa"/>
    <property type="match status" value="1"/>
</dbReference>
<dbReference type="PRINTS" id="PR00981">
    <property type="entry name" value="TRNASYNTHSER"/>
</dbReference>
<dbReference type="SUPFAM" id="SSF55681">
    <property type="entry name" value="Class II aaRS and biotin synthetases"/>
    <property type="match status" value="1"/>
</dbReference>
<dbReference type="SUPFAM" id="SSF46589">
    <property type="entry name" value="tRNA-binding arm"/>
    <property type="match status" value="1"/>
</dbReference>
<dbReference type="PROSITE" id="PS50862">
    <property type="entry name" value="AA_TRNA_LIGASE_II"/>
    <property type="match status" value="1"/>
</dbReference>
<evidence type="ECO:0000250" key="1"/>
<evidence type="ECO:0000269" key="2">
    <source>
    </source>
</evidence>
<evidence type="ECO:0000305" key="3"/>
<protein>
    <recommendedName>
        <fullName>Serine--tRNA ligase</fullName>
        <ecNumber>6.1.1.11</ecNumber>
    </recommendedName>
    <alternativeName>
        <fullName>Seryl-tRNA synthetase</fullName>
        <shortName>SerRS</shortName>
    </alternativeName>
    <alternativeName>
        <fullName>Seryl-tRNA(Ser/Sec) synthetase</fullName>
    </alternativeName>
</protein>
<organism>
    <name type="scientific">Methanosarcina barkeri (strain Fusaro / DSM 804)</name>
    <dbReference type="NCBI Taxonomy" id="269797"/>
    <lineage>
        <taxon>Archaea</taxon>
        <taxon>Methanobacteriati</taxon>
        <taxon>Methanobacteriota</taxon>
        <taxon>Stenosarchaea group</taxon>
        <taxon>Methanomicrobia</taxon>
        <taxon>Methanosarcinales</taxon>
        <taxon>Methanosarcinaceae</taxon>
        <taxon>Methanosarcina</taxon>
    </lineage>
</organism>
<name>SYS_METBF</name>
<keyword id="KW-0030">Aminoacyl-tRNA synthetase</keyword>
<keyword id="KW-0067">ATP-binding</keyword>
<keyword id="KW-0963">Cytoplasm</keyword>
<keyword id="KW-0436">Ligase</keyword>
<keyword id="KW-0547">Nucleotide-binding</keyword>
<keyword id="KW-0648">Protein biosynthesis</keyword>
<sequence length="423" mass="48312">MLDLKFVRSSPDIVRHALINRNMSTELIDSLLEYDIAWRKCLTEGDELKHKRNVVTREIAKLKKENKDTLSKIEEMQGINSRIKEIDDIIRDYKSKIHEIMLRIPNIPSSTTPVGKDENDNPVVRIVGEPRKFTFTPKPHWEIGEALDILDFEKGAKISGQGFTVYKGMGAKLERALVNFMLEVHARQGYLEVFPPVLINEKAMTGTGQLPKFKDDMYLCTDGYYLAPTAEVPVTNLFMDDYIEKLPVFLTAYTACFRREAGKHGQDTRGIIRQHQFNKVELVKFVKPETSYDELEKLTNDAEEILKLLKLPYRVVNLCTGDIGFSAAKTYDLEVWVPTQEKYREISSCSNFENFQARRANIRFRTPDGPQFVHTLNGSGLAVGRTVVAILENYQREDGSVEIPEVLRPYLGGAKEISNEVKT</sequence>
<accession>Q46F20</accession>
<comment type="function">
    <text evidence="2">Catalyzes the attachment of serine to tRNA(Ser). Is also able to aminoacylate tRNA(Sec) with serine, to form the misacylated tRNA L-seryl-tRNA(Sec), which will be further converted into selenocysteinyl-tRNA(Sec).</text>
</comment>
<comment type="catalytic activity">
    <reaction>
        <text>tRNA(Ser) + L-serine + ATP = L-seryl-tRNA(Ser) + AMP + diphosphate + H(+)</text>
        <dbReference type="Rhea" id="RHEA:12292"/>
        <dbReference type="Rhea" id="RHEA-COMP:9669"/>
        <dbReference type="Rhea" id="RHEA-COMP:9703"/>
        <dbReference type="ChEBI" id="CHEBI:15378"/>
        <dbReference type="ChEBI" id="CHEBI:30616"/>
        <dbReference type="ChEBI" id="CHEBI:33019"/>
        <dbReference type="ChEBI" id="CHEBI:33384"/>
        <dbReference type="ChEBI" id="CHEBI:78442"/>
        <dbReference type="ChEBI" id="CHEBI:78533"/>
        <dbReference type="ChEBI" id="CHEBI:456215"/>
        <dbReference type="EC" id="6.1.1.11"/>
    </reaction>
</comment>
<comment type="catalytic activity">
    <reaction>
        <text>tRNA(Sec) + L-serine + ATP = L-seryl-tRNA(Sec) + AMP + diphosphate + H(+)</text>
        <dbReference type="Rhea" id="RHEA:42580"/>
        <dbReference type="Rhea" id="RHEA-COMP:9742"/>
        <dbReference type="Rhea" id="RHEA-COMP:10128"/>
        <dbReference type="ChEBI" id="CHEBI:15378"/>
        <dbReference type="ChEBI" id="CHEBI:30616"/>
        <dbReference type="ChEBI" id="CHEBI:33019"/>
        <dbReference type="ChEBI" id="CHEBI:33384"/>
        <dbReference type="ChEBI" id="CHEBI:78442"/>
        <dbReference type="ChEBI" id="CHEBI:78533"/>
        <dbReference type="ChEBI" id="CHEBI:456215"/>
        <dbReference type="EC" id="6.1.1.11"/>
    </reaction>
</comment>
<comment type="biophysicochemical properties">
    <kinetics>
        <KM evidence="2">34 uM for L-serine</KM>
        <KM evidence="2">13.8 uM for ATP</KM>
        <KM evidence="2">2.9 uM for tRNA(Ser CGA)</KM>
        <KM evidence="2">2.6 uM for tRNA(Ser GGA)</KM>
        <KM evidence="2">1.3 uM for tRNA(Ser GCU)</KM>
        <text>Catalytic efficiency is similar with the tRNA(Ser CGA) and tRNA(Ser GGA) isoacceptors, but is 2-fold higher with tRNA(Ser GCU).</text>
    </kinetics>
</comment>
<comment type="pathway">
    <text>Aminoacyl-tRNA biosynthesis; selenocysteinyl-tRNA(Sec) biosynthesis; L-seryl-tRNA(Sec) from L-serine and tRNA(Sec): step 1/1.</text>
</comment>
<comment type="subunit">
    <text evidence="1">Homodimer. The tRNA molecule binds across the dimer (By similarity).</text>
</comment>
<comment type="subcellular location">
    <subcellularLocation>
        <location evidence="1">Cytoplasm</location>
    </subcellularLocation>
</comment>
<comment type="domain">
    <text evidence="1">Consists of two distinct domains, a catalytic core and a N-terminal extension that is involved in tRNA binding.</text>
</comment>
<comment type="similarity">
    <text evidence="3">Belongs to the class-II aminoacyl-tRNA synthetase family. Type-1 seryl-tRNA synthetase subfamily.</text>
</comment>
<comment type="sequence caution" evidence="3">
    <conflict type="erroneous initiation">
        <sequence resource="EMBL-CDS" id="AAZ69522"/>
    </conflict>
</comment>
<feature type="chain" id="PRO_0000285288" description="Serine--tRNA ligase">
    <location>
        <begin position="1"/>
        <end position="423"/>
    </location>
</feature>
<feature type="binding site" evidence="1">
    <location>
        <begin position="229"/>
        <end position="231"/>
    </location>
    <ligand>
        <name>L-serine</name>
        <dbReference type="ChEBI" id="CHEBI:33384"/>
    </ligand>
</feature>
<feature type="binding site" evidence="1">
    <location>
        <begin position="258"/>
        <end position="260"/>
    </location>
    <ligand>
        <name>ATP</name>
        <dbReference type="ChEBI" id="CHEBI:30616"/>
    </ligand>
</feature>
<feature type="binding site" evidence="1">
    <location>
        <position position="281"/>
    </location>
    <ligand>
        <name>L-serine</name>
        <dbReference type="ChEBI" id="CHEBI:33384"/>
    </ligand>
</feature>
<feature type="binding site" evidence="1">
    <location>
        <begin position="345"/>
        <end position="348"/>
    </location>
    <ligand>
        <name>ATP</name>
        <dbReference type="ChEBI" id="CHEBI:30616"/>
    </ligand>
</feature>
<feature type="binding site" evidence="1">
    <location>
        <position position="379"/>
    </location>
    <ligand>
        <name>L-serine</name>
        <dbReference type="ChEBI" id="CHEBI:33384"/>
    </ligand>
</feature>